<keyword id="KW-0963">Cytoplasm</keyword>
<keyword id="KW-0460">Magnesium</keyword>
<keyword id="KW-0479">Metal-binding</keyword>
<keyword id="KW-0548">Nucleotidyltransferase</keyword>
<keyword id="KW-1185">Reference proteome</keyword>
<keyword id="KW-0694">RNA-binding</keyword>
<keyword id="KW-0808">Transferase</keyword>
<dbReference type="EC" id="2.7.7.8" evidence="1"/>
<dbReference type="EMBL" id="CP001389">
    <property type="protein sequence ID" value="ACP27296.1"/>
    <property type="molecule type" value="Genomic_DNA"/>
</dbReference>
<dbReference type="RefSeq" id="WP_012710041.1">
    <property type="nucleotide sequence ID" value="NC_012587.1"/>
</dbReference>
<dbReference type="RefSeq" id="YP_002828049.1">
    <property type="nucleotide sequence ID" value="NC_012587.1"/>
</dbReference>
<dbReference type="SMR" id="C3MC71"/>
<dbReference type="STRING" id="394.NGR_c35730"/>
<dbReference type="KEGG" id="rhi:NGR_c35730"/>
<dbReference type="PATRIC" id="fig|394.7.peg.6426"/>
<dbReference type="eggNOG" id="COG1185">
    <property type="taxonomic scope" value="Bacteria"/>
</dbReference>
<dbReference type="HOGENOM" id="CLU_004217_2_2_5"/>
<dbReference type="OrthoDB" id="9804305at2"/>
<dbReference type="Proteomes" id="UP000001054">
    <property type="component" value="Chromosome"/>
</dbReference>
<dbReference type="GO" id="GO:0005829">
    <property type="term" value="C:cytosol"/>
    <property type="evidence" value="ECO:0007669"/>
    <property type="project" value="TreeGrafter"/>
</dbReference>
<dbReference type="GO" id="GO:0000175">
    <property type="term" value="F:3'-5'-RNA exonuclease activity"/>
    <property type="evidence" value="ECO:0007669"/>
    <property type="project" value="TreeGrafter"/>
</dbReference>
<dbReference type="GO" id="GO:0000287">
    <property type="term" value="F:magnesium ion binding"/>
    <property type="evidence" value="ECO:0007669"/>
    <property type="project" value="UniProtKB-UniRule"/>
</dbReference>
<dbReference type="GO" id="GO:0004654">
    <property type="term" value="F:polyribonucleotide nucleotidyltransferase activity"/>
    <property type="evidence" value="ECO:0007669"/>
    <property type="project" value="UniProtKB-UniRule"/>
</dbReference>
<dbReference type="GO" id="GO:0003723">
    <property type="term" value="F:RNA binding"/>
    <property type="evidence" value="ECO:0007669"/>
    <property type="project" value="UniProtKB-UniRule"/>
</dbReference>
<dbReference type="GO" id="GO:0006402">
    <property type="term" value="P:mRNA catabolic process"/>
    <property type="evidence" value="ECO:0007669"/>
    <property type="project" value="UniProtKB-UniRule"/>
</dbReference>
<dbReference type="GO" id="GO:0006396">
    <property type="term" value="P:RNA processing"/>
    <property type="evidence" value="ECO:0007669"/>
    <property type="project" value="InterPro"/>
</dbReference>
<dbReference type="CDD" id="cd02393">
    <property type="entry name" value="KH-I_PNPase"/>
    <property type="match status" value="1"/>
</dbReference>
<dbReference type="CDD" id="cd11363">
    <property type="entry name" value="RNase_PH_PNPase_1"/>
    <property type="match status" value="1"/>
</dbReference>
<dbReference type="CDD" id="cd11364">
    <property type="entry name" value="RNase_PH_PNPase_2"/>
    <property type="match status" value="1"/>
</dbReference>
<dbReference type="CDD" id="cd04472">
    <property type="entry name" value="S1_PNPase"/>
    <property type="match status" value="1"/>
</dbReference>
<dbReference type="FunFam" id="2.40.50.140:FF:000107">
    <property type="entry name" value="Polyribonucleotide nucleotidyltransferase"/>
    <property type="match status" value="1"/>
</dbReference>
<dbReference type="FunFam" id="3.30.1370.10:FF:000001">
    <property type="entry name" value="Polyribonucleotide nucleotidyltransferase"/>
    <property type="match status" value="1"/>
</dbReference>
<dbReference type="FunFam" id="3.30.230.70:FF:000001">
    <property type="entry name" value="Polyribonucleotide nucleotidyltransferase"/>
    <property type="match status" value="1"/>
</dbReference>
<dbReference type="FunFam" id="3.30.230.70:FF:000002">
    <property type="entry name" value="Polyribonucleotide nucleotidyltransferase"/>
    <property type="match status" value="1"/>
</dbReference>
<dbReference type="Gene3D" id="3.30.230.70">
    <property type="entry name" value="GHMP Kinase, N-terminal domain"/>
    <property type="match status" value="2"/>
</dbReference>
<dbReference type="Gene3D" id="3.30.1370.10">
    <property type="entry name" value="K Homology domain, type 1"/>
    <property type="match status" value="1"/>
</dbReference>
<dbReference type="Gene3D" id="2.40.50.140">
    <property type="entry name" value="Nucleic acid-binding proteins"/>
    <property type="match status" value="1"/>
</dbReference>
<dbReference type="HAMAP" id="MF_01595">
    <property type="entry name" value="PNPase"/>
    <property type="match status" value="1"/>
</dbReference>
<dbReference type="InterPro" id="IPR001247">
    <property type="entry name" value="ExoRNase_PH_dom1"/>
</dbReference>
<dbReference type="InterPro" id="IPR015847">
    <property type="entry name" value="ExoRNase_PH_dom2"/>
</dbReference>
<dbReference type="InterPro" id="IPR036345">
    <property type="entry name" value="ExoRNase_PH_dom2_sf"/>
</dbReference>
<dbReference type="InterPro" id="IPR004087">
    <property type="entry name" value="KH_dom"/>
</dbReference>
<dbReference type="InterPro" id="IPR004088">
    <property type="entry name" value="KH_dom_type_1"/>
</dbReference>
<dbReference type="InterPro" id="IPR036612">
    <property type="entry name" value="KH_dom_type_1_sf"/>
</dbReference>
<dbReference type="InterPro" id="IPR012340">
    <property type="entry name" value="NA-bd_OB-fold"/>
</dbReference>
<dbReference type="InterPro" id="IPR012162">
    <property type="entry name" value="PNPase"/>
</dbReference>
<dbReference type="InterPro" id="IPR027408">
    <property type="entry name" value="PNPase/RNase_PH_dom_sf"/>
</dbReference>
<dbReference type="InterPro" id="IPR015848">
    <property type="entry name" value="PNPase_PH_RNA-bd_bac/org-type"/>
</dbReference>
<dbReference type="InterPro" id="IPR020568">
    <property type="entry name" value="Ribosomal_Su5_D2-typ_SF"/>
</dbReference>
<dbReference type="InterPro" id="IPR003029">
    <property type="entry name" value="S1_domain"/>
</dbReference>
<dbReference type="NCBIfam" id="TIGR03591">
    <property type="entry name" value="polynuc_phos"/>
    <property type="match status" value="1"/>
</dbReference>
<dbReference type="NCBIfam" id="NF008805">
    <property type="entry name" value="PRK11824.1"/>
    <property type="match status" value="1"/>
</dbReference>
<dbReference type="PANTHER" id="PTHR11252">
    <property type="entry name" value="POLYRIBONUCLEOTIDE NUCLEOTIDYLTRANSFERASE"/>
    <property type="match status" value="1"/>
</dbReference>
<dbReference type="PANTHER" id="PTHR11252:SF0">
    <property type="entry name" value="POLYRIBONUCLEOTIDE NUCLEOTIDYLTRANSFERASE 1, MITOCHONDRIAL"/>
    <property type="match status" value="1"/>
</dbReference>
<dbReference type="Pfam" id="PF00013">
    <property type="entry name" value="KH_1"/>
    <property type="match status" value="1"/>
</dbReference>
<dbReference type="Pfam" id="PF03726">
    <property type="entry name" value="PNPase"/>
    <property type="match status" value="1"/>
</dbReference>
<dbReference type="Pfam" id="PF01138">
    <property type="entry name" value="RNase_PH"/>
    <property type="match status" value="2"/>
</dbReference>
<dbReference type="Pfam" id="PF03725">
    <property type="entry name" value="RNase_PH_C"/>
    <property type="match status" value="2"/>
</dbReference>
<dbReference type="Pfam" id="PF00575">
    <property type="entry name" value="S1"/>
    <property type="match status" value="1"/>
</dbReference>
<dbReference type="PIRSF" id="PIRSF005499">
    <property type="entry name" value="PNPase"/>
    <property type="match status" value="1"/>
</dbReference>
<dbReference type="SMART" id="SM00322">
    <property type="entry name" value="KH"/>
    <property type="match status" value="1"/>
</dbReference>
<dbReference type="SMART" id="SM00316">
    <property type="entry name" value="S1"/>
    <property type="match status" value="1"/>
</dbReference>
<dbReference type="SUPFAM" id="SSF54791">
    <property type="entry name" value="Eukaryotic type KH-domain (KH-domain type I)"/>
    <property type="match status" value="1"/>
</dbReference>
<dbReference type="SUPFAM" id="SSF50249">
    <property type="entry name" value="Nucleic acid-binding proteins"/>
    <property type="match status" value="1"/>
</dbReference>
<dbReference type="SUPFAM" id="SSF55666">
    <property type="entry name" value="Ribonuclease PH domain 2-like"/>
    <property type="match status" value="2"/>
</dbReference>
<dbReference type="SUPFAM" id="SSF54211">
    <property type="entry name" value="Ribosomal protein S5 domain 2-like"/>
    <property type="match status" value="2"/>
</dbReference>
<dbReference type="PROSITE" id="PS50084">
    <property type="entry name" value="KH_TYPE_1"/>
    <property type="match status" value="1"/>
</dbReference>
<dbReference type="PROSITE" id="PS50126">
    <property type="entry name" value="S1"/>
    <property type="match status" value="1"/>
</dbReference>
<sequence>MFETHKVEIEWAGRPLKLETGKIARQADGAVLATYGETVVLATVVSAKAPKPGQDFFPLTVNYQEKTYAAGKIPGGYFKREGRPSENETLVSRLIDRPIRPLFPDGYKNDTQVIVTVMQHDLENNPDVVSMVAASAALTLSGIPFMGPIGGARVGYINGEYVLNPHLDEMDESSLDLVVAGTQEAVLMVESEAKELPEDVMLGAVVFGQQGFQPVIDAIIKLAEVAAKEPREFDPEDHSALENAMLAIAEDELRNAYKITEKAARYAAVDAVKAKVKEHFLPEGIENPAHTAEEIGSVFKHLQAKIVRWNILDTKSRIDGRDLETVRPIVSEVGLLPRTHGSALFTRGETQAIVVATLGTGEDEQYVDSLTGMYKERFMLHYNFPPFSVGETGRMGSPGRREIGHGKLAWRAIRPMLPEAEQFPYTLRVVSEITESNGSSSMATVCGTSLALMDAGVPLAKPVAGIAMGLIKEDERFAVLSDILGDEDHLGDMDFKVAGTEAGITSLQMDIKIEGITEEIMGIALNQAKGGRLHILGEMAKAISESRGQLGEFAPRIEVMNIPVDKIREVIGSGGKVIREIVEKTGAKINIEDDGTVKIASSSGKEIEAARKWIHSIVAEPEVGQIYEGTVVKTADFGAFVNFFGARDGLVHISQLASERVAKTTDVVKEGDKVWVKLMGFDERGKVRLSMKVVDQATGKEVVAEKGEKKDGGEAAE</sequence>
<organism>
    <name type="scientific">Sinorhizobium fredii (strain NBRC 101917 / NGR234)</name>
    <dbReference type="NCBI Taxonomy" id="394"/>
    <lineage>
        <taxon>Bacteria</taxon>
        <taxon>Pseudomonadati</taxon>
        <taxon>Pseudomonadota</taxon>
        <taxon>Alphaproteobacteria</taxon>
        <taxon>Hyphomicrobiales</taxon>
        <taxon>Rhizobiaceae</taxon>
        <taxon>Sinorhizobium/Ensifer group</taxon>
        <taxon>Sinorhizobium</taxon>
    </lineage>
</organism>
<comment type="function">
    <text evidence="1">Involved in mRNA degradation. Catalyzes the phosphorolysis of single-stranded polyribonucleotides processively in the 3'- to 5'-direction.</text>
</comment>
<comment type="catalytic activity">
    <reaction evidence="1">
        <text>RNA(n+1) + phosphate = RNA(n) + a ribonucleoside 5'-diphosphate</text>
        <dbReference type="Rhea" id="RHEA:22096"/>
        <dbReference type="Rhea" id="RHEA-COMP:14527"/>
        <dbReference type="Rhea" id="RHEA-COMP:17342"/>
        <dbReference type="ChEBI" id="CHEBI:43474"/>
        <dbReference type="ChEBI" id="CHEBI:57930"/>
        <dbReference type="ChEBI" id="CHEBI:140395"/>
        <dbReference type="EC" id="2.7.7.8"/>
    </reaction>
</comment>
<comment type="cofactor">
    <cofactor evidence="1">
        <name>Mg(2+)</name>
        <dbReference type="ChEBI" id="CHEBI:18420"/>
    </cofactor>
</comment>
<comment type="subcellular location">
    <subcellularLocation>
        <location evidence="1">Cytoplasm</location>
    </subcellularLocation>
</comment>
<comment type="similarity">
    <text evidence="1">Belongs to the polyribonucleotide nucleotidyltransferase family.</text>
</comment>
<protein>
    <recommendedName>
        <fullName evidence="1">Polyribonucleotide nucleotidyltransferase</fullName>
        <ecNumber evidence="1">2.7.7.8</ecNumber>
    </recommendedName>
    <alternativeName>
        <fullName evidence="1">Polynucleotide phosphorylase</fullName>
        <shortName evidence="1">PNPase</shortName>
    </alternativeName>
</protein>
<accession>C3MC71</accession>
<feature type="chain" id="PRO_1000185748" description="Polyribonucleotide nucleotidyltransferase">
    <location>
        <begin position="1"/>
        <end position="717"/>
    </location>
</feature>
<feature type="domain" description="KH" evidence="1">
    <location>
        <begin position="555"/>
        <end position="614"/>
    </location>
</feature>
<feature type="domain" description="S1 motif" evidence="1">
    <location>
        <begin position="624"/>
        <end position="692"/>
    </location>
</feature>
<feature type="binding site" evidence="1">
    <location>
        <position position="488"/>
    </location>
    <ligand>
        <name>Mg(2+)</name>
        <dbReference type="ChEBI" id="CHEBI:18420"/>
    </ligand>
</feature>
<feature type="binding site" evidence="1">
    <location>
        <position position="494"/>
    </location>
    <ligand>
        <name>Mg(2+)</name>
        <dbReference type="ChEBI" id="CHEBI:18420"/>
    </ligand>
</feature>
<evidence type="ECO:0000255" key="1">
    <source>
        <dbReference type="HAMAP-Rule" id="MF_01595"/>
    </source>
</evidence>
<name>PNP_SINFN</name>
<reference key="1">
    <citation type="journal article" date="2009" name="Appl. Environ. Microbiol.">
        <title>Rhizobium sp. strain NGR234 possesses a remarkable number of secretion systems.</title>
        <authorList>
            <person name="Schmeisser C."/>
            <person name="Liesegang H."/>
            <person name="Krysciak D."/>
            <person name="Bakkou N."/>
            <person name="Le Quere A."/>
            <person name="Wollherr A."/>
            <person name="Heinemeyer I."/>
            <person name="Morgenstern B."/>
            <person name="Pommerening-Roeser A."/>
            <person name="Flores M."/>
            <person name="Palacios R."/>
            <person name="Brenner S."/>
            <person name="Gottschalk G."/>
            <person name="Schmitz R.A."/>
            <person name="Broughton W.J."/>
            <person name="Perret X."/>
            <person name="Strittmatter A.W."/>
            <person name="Streit W.R."/>
        </authorList>
    </citation>
    <scope>NUCLEOTIDE SEQUENCE [LARGE SCALE GENOMIC DNA]</scope>
    <source>
        <strain>NBRC 101917 / NGR234</strain>
    </source>
</reference>
<proteinExistence type="inferred from homology"/>
<gene>
    <name evidence="1" type="primary">pnp</name>
    <name type="ordered locus">NGR_c35730</name>
</gene>